<keyword id="KW-0007">Acetylation</keyword>
<keyword id="KW-0333">Golgi apparatus</keyword>
<keyword id="KW-0472">Membrane</keyword>
<keyword id="KW-0597">Phosphoprotein</keyword>
<keyword id="KW-0653">Protein transport</keyword>
<keyword id="KW-1185">Reference proteome</keyword>
<keyword id="KW-0813">Transport</keyword>
<proteinExistence type="evidence at protein level"/>
<accession>P53079</accession>
<accession>D6VVB2</accession>
<name>COG1_YEAST</name>
<comment type="function">
    <text evidence="3 4">Acts as essential component of the peripheral membrane COG complex that is involved in intra-Golgi protein trafficking. COG is located at the cis-Golgi, and regulates tethering of retrograde intra-Golgi vesicles and possibly a number of other membrane trafficking events.</text>
</comment>
<comment type="subunit">
    <text evidence="2 3 4">Component of the conserved oligomeric Golgi (COG or Sec34/Sec35) complex which consists of eight different proteins COG1-COG8.</text>
</comment>
<comment type="interaction">
    <interactant intactId="EBI-4835">
        <id>P53079</id>
    </interactant>
    <interactant intactId="EBI-16614">
        <id>P53271</id>
        <label>COG2</label>
    </interactant>
    <organismsDiffer>false</organismsDiffer>
    <experiments>17</experiments>
</comment>
<comment type="interaction">
    <interactant intactId="EBI-4835">
        <id>P53079</id>
    </interactant>
    <interactant intactId="EBI-16605">
        <id>P40094</id>
        <label>COG3</label>
    </interactant>
    <organismsDiffer>false</organismsDiffer>
    <experiments>13</experiments>
</comment>
<comment type="interaction">
    <interactant intactId="EBI-4835">
        <id>P53079</id>
    </interactant>
    <interactant intactId="EBI-4823">
        <id>Q06096</id>
        <label>COG4</label>
    </interactant>
    <organismsDiffer>false</organismsDiffer>
    <experiments>10</experiments>
</comment>
<comment type="interaction">
    <interactant intactId="EBI-4835">
        <id>P53079</id>
    </interactant>
    <interactant intactId="EBI-4841">
        <id>P53951</id>
        <label>COG5</label>
    </interactant>
    <organismsDiffer>false</organismsDiffer>
    <experiments>7</experiments>
</comment>
<comment type="interaction">
    <interactant intactId="EBI-4835">
        <id>P53079</id>
    </interactant>
    <interactant intactId="EBI-4829">
        <id>P53959</id>
        <label>COG6</label>
    </interactant>
    <organismsDiffer>false</organismsDiffer>
    <experiments>6</experiments>
</comment>
<comment type="interaction">
    <interactant intactId="EBI-4835">
        <id>P53079</id>
    </interactant>
    <interactant intactId="EBI-6035">
        <id>Q04632</id>
        <label>COG8</label>
    </interactant>
    <organismsDiffer>false</organismsDiffer>
    <experiments>9</experiments>
</comment>
<comment type="subcellular location">
    <subcellularLocation>
        <location evidence="1">Golgi apparatus membrane</location>
        <topology evidence="1">Peripheral membrane protein</topology>
        <orientation evidence="1">Cytoplasmic side</orientation>
    </subcellularLocation>
</comment>
<comment type="miscellaneous">
    <text evidence="5">Present with 2190 molecules/cell in log phase SD medium.</text>
</comment>
<comment type="similarity">
    <text evidence="6">Belongs to the COG1 family.</text>
</comment>
<protein>
    <recommendedName>
        <fullName>Conserved oligomeric Golgi complex subunit 1</fullName>
        <shortName>COG complex subunit 1</shortName>
    </recommendedName>
    <alternativeName>
        <fullName>Complexed with DOR1 protein 3</fullName>
    </alternativeName>
    <alternativeName>
        <fullName>Component of oligomeric Golgi complex 1</fullName>
    </alternativeName>
    <alternativeName>
        <fullName>Protein SEC36</fullName>
    </alternativeName>
</protein>
<dbReference type="EMBL" id="Z72745">
    <property type="protein sequence ID" value="CAA96939.1"/>
    <property type="molecule type" value="Genomic_DNA"/>
</dbReference>
<dbReference type="EMBL" id="AY692796">
    <property type="protein sequence ID" value="AAT92815.1"/>
    <property type="molecule type" value="Genomic_DNA"/>
</dbReference>
<dbReference type="EMBL" id="BK006941">
    <property type="protein sequence ID" value="DAA07896.1"/>
    <property type="molecule type" value="Genomic_DNA"/>
</dbReference>
<dbReference type="PIR" id="S64245">
    <property type="entry name" value="S64245"/>
</dbReference>
<dbReference type="RefSeq" id="NP_011292.1">
    <property type="nucleotide sequence ID" value="NM_001181088.1"/>
</dbReference>
<dbReference type="SMR" id="P53079"/>
<dbReference type="BioGRID" id="33036">
    <property type="interactions" value="55"/>
</dbReference>
<dbReference type="ComplexPortal" id="CPX-1840">
    <property type="entry name" value="COG Golgi transport complex"/>
</dbReference>
<dbReference type="DIP" id="DIP-4374N"/>
<dbReference type="FunCoup" id="P53079">
    <property type="interactions" value="56"/>
</dbReference>
<dbReference type="IntAct" id="P53079">
    <property type="interactions" value="12"/>
</dbReference>
<dbReference type="MINT" id="P53079"/>
<dbReference type="STRING" id="4932.YGL223C"/>
<dbReference type="iPTMnet" id="P53079"/>
<dbReference type="PaxDb" id="4932-YGL223C"/>
<dbReference type="PeptideAtlas" id="P53079"/>
<dbReference type="EnsemblFungi" id="YGL223C_mRNA">
    <property type="protein sequence ID" value="YGL223C"/>
    <property type="gene ID" value="YGL223C"/>
</dbReference>
<dbReference type="GeneID" id="852649"/>
<dbReference type="KEGG" id="sce:YGL223C"/>
<dbReference type="AGR" id="SGD:S000003191"/>
<dbReference type="SGD" id="S000003191">
    <property type="gene designation" value="COG1"/>
</dbReference>
<dbReference type="VEuPathDB" id="FungiDB:YGL223C"/>
<dbReference type="eggNOG" id="ENOG502S2SK">
    <property type="taxonomic scope" value="Eukaryota"/>
</dbReference>
<dbReference type="HOGENOM" id="CLU_657476_0_0_1"/>
<dbReference type="InParanoid" id="P53079"/>
<dbReference type="OMA" id="IFHDNDT"/>
<dbReference type="OrthoDB" id="4068191at2759"/>
<dbReference type="BioCyc" id="YEAST:G3O-30697-MONOMER"/>
<dbReference type="BioGRID-ORCS" id="852649">
    <property type="hits" value="2 hits in 10 CRISPR screens"/>
</dbReference>
<dbReference type="PRO" id="PR:P53079"/>
<dbReference type="Proteomes" id="UP000002311">
    <property type="component" value="Chromosome VII"/>
</dbReference>
<dbReference type="RNAct" id="P53079">
    <property type="molecule type" value="protein"/>
</dbReference>
<dbReference type="GO" id="GO:0000139">
    <property type="term" value="C:Golgi membrane"/>
    <property type="evidence" value="ECO:0000303"/>
    <property type="project" value="ComplexPortal"/>
</dbReference>
<dbReference type="GO" id="GO:0017119">
    <property type="term" value="C:Golgi transport complex"/>
    <property type="evidence" value="ECO:0000315"/>
    <property type="project" value="SGD"/>
</dbReference>
<dbReference type="GO" id="GO:0030674">
    <property type="term" value="F:protein-macromolecule adaptor activity"/>
    <property type="evidence" value="ECO:0000315"/>
    <property type="project" value="SGD"/>
</dbReference>
<dbReference type="GO" id="GO:0032258">
    <property type="term" value="P:cytoplasm to vacuole targeting by the Cvt pathway"/>
    <property type="evidence" value="ECO:0000315"/>
    <property type="project" value="SGD"/>
</dbReference>
<dbReference type="GO" id="GO:0007030">
    <property type="term" value="P:Golgi organization"/>
    <property type="evidence" value="ECO:0000315"/>
    <property type="project" value="SGD"/>
</dbReference>
<dbReference type="GO" id="GO:0006891">
    <property type="term" value="P:intra-Golgi vesicle-mediated transport"/>
    <property type="evidence" value="ECO:0000315"/>
    <property type="project" value="SGD"/>
</dbReference>
<dbReference type="GO" id="GO:0000301">
    <property type="term" value="P:retrograde transport, vesicle recycling within Golgi"/>
    <property type="evidence" value="ECO:0000315"/>
    <property type="project" value="SGD"/>
</dbReference>
<reference key="1">
    <citation type="journal article" date="1997" name="Yeast">
        <title>Sequence analysis of 203 kilobases from Saccharomyces cerevisiae chromosome VII.</title>
        <authorList>
            <person name="Rieger M."/>
            <person name="Brueckner M."/>
            <person name="Schaefer M."/>
            <person name="Mueller-Auer S."/>
        </authorList>
    </citation>
    <scope>NUCLEOTIDE SEQUENCE [GENOMIC DNA]</scope>
    <source>
        <strain>ATCC 204508 / S288c</strain>
    </source>
</reference>
<reference key="2">
    <citation type="journal article" date="1997" name="Nature">
        <title>The nucleotide sequence of Saccharomyces cerevisiae chromosome VII.</title>
        <authorList>
            <person name="Tettelin H."/>
            <person name="Agostoni-Carbone M.L."/>
            <person name="Albermann K."/>
            <person name="Albers M."/>
            <person name="Arroyo J."/>
            <person name="Backes U."/>
            <person name="Barreiros T."/>
            <person name="Bertani I."/>
            <person name="Bjourson A.J."/>
            <person name="Brueckner M."/>
            <person name="Bruschi C.V."/>
            <person name="Carignani G."/>
            <person name="Castagnoli L."/>
            <person name="Cerdan E."/>
            <person name="Clemente M.L."/>
            <person name="Coblenz A."/>
            <person name="Coglievina M."/>
            <person name="Coissac E."/>
            <person name="Defoor E."/>
            <person name="Del Bino S."/>
            <person name="Delius H."/>
            <person name="Delneri D."/>
            <person name="de Wergifosse P."/>
            <person name="Dujon B."/>
            <person name="Durand P."/>
            <person name="Entian K.-D."/>
            <person name="Eraso P."/>
            <person name="Escribano V."/>
            <person name="Fabiani L."/>
            <person name="Fartmann B."/>
            <person name="Feroli F."/>
            <person name="Feuermann M."/>
            <person name="Frontali L."/>
            <person name="Garcia-Gonzalez M."/>
            <person name="Garcia-Saez M.I."/>
            <person name="Goffeau A."/>
            <person name="Guerreiro P."/>
            <person name="Hani J."/>
            <person name="Hansen M."/>
            <person name="Hebling U."/>
            <person name="Hernandez K."/>
            <person name="Heumann K."/>
            <person name="Hilger F."/>
            <person name="Hofmann B."/>
            <person name="Indge K.J."/>
            <person name="James C.M."/>
            <person name="Klima R."/>
            <person name="Koetter P."/>
            <person name="Kramer B."/>
            <person name="Kramer W."/>
            <person name="Lauquin G."/>
            <person name="Leuther H."/>
            <person name="Louis E.J."/>
            <person name="Maillier E."/>
            <person name="Marconi A."/>
            <person name="Martegani E."/>
            <person name="Mazon M.J."/>
            <person name="Mazzoni C."/>
            <person name="McReynolds A.D.K."/>
            <person name="Melchioretto P."/>
            <person name="Mewes H.-W."/>
            <person name="Minenkova O."/>
            <person name="Mueller-Auer S."/>
            <person name="Nawrocki A."/>
            <person name="Netter P."/>
            <person name="Neu R."/>
            <person name="Nombela C."/>
            <person name="Oliver S.G."/>
            <person name="Panzeri L."/>
            <person name="Paoluzi S."/>
            <person name="Plevani P."/>
            <person name="Portetelle D."/>
            <person name="Portillo F."/>
            <person name="Potier S."/>
            <person name="Purnelle B."/>
            <person name="Rieger M."/>
            <person name="Riles L."/>
            <person name="Rinaldi T."/>
            <person name="Robben J."/>
            <person name="Rodrigues-Pousada C."/>
            <person name="Rodriguez-Belmonte E."/>
            <person name="Rodriguez-Torres A.M."/>
            <person name="Rose M."/>
            <person name="Ruzzi M."/>
            <person name="Saliola M."/>
            <person name="Sanchez-Perez M."/>
            <person name="Schaefer B."/>
            <person name="Schaefer M."/>
            <person name="Scharfe M."/>
            <person name="Schmidheini T."/>
            <person name="Schreer A."/>
            <person name="Skala J."/>
            <person name="Souciet J.-L."/>
            <person name="Steensma H.Y."/>
            <person name="Talla E."/>
            <person name="Thierry A."/>
            <person name="Vandenbol M."/>
            <person name="van der Aart Q.J.M."/>
            <person name="Van Dyck L."/>
            <person name="Vanoni M."/>
            <person name="Verhasselt P."/>
            <person name="Voet M."/>
            <person name="Volckaert G."/>
            <person name="Wambutt R."/>
            <person name="Watson M.D."/>
            <person name="Weber N."/>
            <person name="Wedler E."/>
            <person name="Wedler H."/>
            <person name="Wipfli P."/>
            <person name="Wolf K."/>
            <person name="Wright L.F."/>
            <person name="Zaccaria P."/>
            <person name="Zimmermann M."/>
            <person name="Zollner A."/>
            <person name="Kleine K."/>
        </authorList>
    </citation>
    <scope>NUCLEOTIDE SEQUENCE [LARGE SCALE GENOMIC DNA]</scope>
    <source>
        <strain>ATCC 204508 / S288c</strain>
    </source>
</reference>
<reference key="3">
    <citation type="journal article" date="2014" name="G3 (Bethesda)">
        <title>The reference genome sequence of Saccharomyces cerevisiae: Then and now.</title>
        <authorList>
            <person name="Engel S.R."/>
            <person name="Dietrich F.S."/>
            <person name="Fisk D.G."/>
            <person name="Binkley G."/>
            <person name="Balakrishnan R."/>
            <person name="Costanzo M.C."/>
            <person name="Dwight S.S."/>
            <person name="Hitz B.C."/>
            <person name="Karra K."/>
            <person name="Nash R.S."/>
            <person name="Weng S."/>
            <person name="Wong E.D."/>
            <person name="Lloyd P."/>
            <person name="Skrzypek M.S."/>
            <person name="Miyasato S.R."/>
            <person name="Simison M."/>
            <person name="Cherry J.M."/>
        </authorList>
    </citation>
    <scope>GENOME REANNOTATION</scope>
    <source>
        <strain>ATCC 204508 / S288c</strain>
    </source>
</reference>
<reference key="4">
    <citation type="journal article" date="2007" name="Genome Res.">
        <title>Approaching a complete repository of sequence-verified protein-encoding clones for Saccharomyces cerevisiae.</title>
        <authorList>
            <person name="Hu Y."/>
            <person name="Rolfs A."/>
            <person name="Bhullar B."/>
            <person name="Murthy T.V.S."/>
            <person name="Zhu C."/>
            <person name="Berger M.F."/>
            <person name="Camargo A.A."/>
            <person name="Kelley F."/>
            <person name="McCarron S."/>
            <person name="Jepson D."/>
            <person name="Richardson A."/>
            <person name="Raphael J."/>
            <person name="Moreira D."/>
            <person name="Taycher E."/>
            <person name="Zuo D."/>
            <person name="Mohr S."/>
            <person name="Kane M.F."/>
            <person name="Williamson J."/>
            <person name="Simpson A.J.G."/>
            <person name="Bulyk M.L."/>
            <person name="Harlow E."/>
            <person name="Marsischky G."/>
            <person name="Kolodner R.D."/>
            <person name="LaBaer J."/>
        </authorList>
    </citation>
    <scope>NUCLEOTIDE SEQUENCE [GENOMIC DNA]</scope>
    <source>
        <strain>ATCC 204508 / S288c</strain>
    </source>
</reference>
<reference key="5">
    <citation type="journal article" date="2001" name="Dev. Cell">
        <title>The Sec34/35 Golgi transport complex is related to the exocyst, defining a family of complexes involved in multiple steps of membrane traffic.</title>
        <authorList>
            <person name="Whyte J.R."/>
            <person name="Munro S."/>
        </authorList>
    </citation>
    <scope>SUBUNIT</scope>
</reference>
<reference key="6">
    <citation type="journal article" date="2002" name="J. Cell Biol.">
        <title>The Sec34/Sec35p complex, a Ypt1p effector required for retrograde intra-Golgi trafficking, interacts with Golgi SNAREs and COPI vesicle coat proteins.</title>
        <authorList>
            <person name="Suvorova E.S."/>
            <person name="Duden R."/>
            <person name="Lupashin V.V."/>
        </authorList>
    </citation>
    <scope>IDENTIFICATION IN THE COG COMPLEX</scope>
    <scope>FUNCTION OF THE COG COMPLEX</scope>
</reference>
<reference key="7">
    <citation type="journal article" date="2002" name="Mol. Biol. Cell">
        <title>Identification of sec36p, sec37p, and sec38p: components of yeast complex that contains sec34p and sec35p.</title>
        <authorList>
            <person name="Ram R.J."/>
            <person name="Li B."/>
            <person name="Kaiser C.A."/>
        </authorList>
    </citation>
    <scope>FUNCTION</scope>
    <scope>IDENTIFICATION IN THE COG COMPLEX</scope>
</reference>
<reference key="8">
    <citation type="journal article" date="2003" name="Nature">
        <title>Global analysis of protein expression in yeast.</title>
        <authorList>
            <person name="Ghaemmaghami S."/>
            <person name="Huh W.-K."/>
            <person name="Bower K."/>
            <person name="Howson R.W."/>
            <person name="Belle A."/>
            <person name="Dephoure N."/>
            <person name="O'Shea E.K."/>
            <person name="Weissman J.S."/>
        </authorList>
    </citation>
    <scope>LEVEL OF PROTEIN EXPRESSION [LARGE SCALE ANALYSIS]</scope>
</reference>
<reference key="9">
    <citation type="journal article" date="2004" name="J. Biol. Chem.">
        <title>The binary interacting network of the conserved oligomeric Golgi tethering complex.</title>
        <authorList>
            <person name="Loh E."/>
            <person name="Hong W."/>
        </authorList>
    </citation>
    <scope>COMPOSITION OF THE COG COMPLEX</scope>
    <scope>INTERACTION WITH COG3 AND COG4</scope>
</reference>
<reference key="10">
    <citation type="journal article" date="2009" name="Science">
        <title>Global analysis of Cdk1 substrate phosphorylation sites provides insights into evolution.</title>
        <authorList>
            <person name="Holt L.J."/>
            <person name="Tuch B.B."/>
            <person name="Villen J."/>
            <person name="Johnson A.D."/>
            <person name="Gygi S.P."/>
            <person name="Morgan D.O."/>
        </authorList>
    </citation>
    <scope>PHOSPHORYLATION [LARGE SCALE ANALYSIS] AT SER-305</scope>
    <scope>IDENTIFICATION BY MASS SPECTROMETRY [LARGE SCALE ANALYSIS]</scope>
</reference>
<reference key="11">
    <citation type="journal article" date="2012" name="Proc. Natl. Acad. Sci. U.S.A.">
        <title>N-terminal acetylome analyses and functional insights of the N-terminal acetyltransferase NatB.</title>
        <authorList>
            <person name="Van Damme P."/>
            <person name="Lasa M."/>
            <person name="Polevoda B."/>
            <person name="Gazquez C."/>
            <person name="Elosegui-Artola A."/>
            <person name="Kim D.S."/>
            <person name="De Juan-Pardo E."/>
            <person name="Demeyer K."/>
            <person name="Hole K."/>
            <person name="Larrea E."/>
            <person name="Timmerman E."/>
            <person name="Prieto J."/>
            <person name="Arnesen T."/>
            <person name="Sherman F."/>
            <person name="Gevaert K."/>
            <person name="Aldabe R."/>
        </authorList>
    </citation>
    <scope>ACETYLATION [LARGE SCALE ANALYSIS] AT MET-1</scope>
    <scope>IDENTIFICATION BY MASS SPECTROMETRY [LARGE SCALE ANALYSIS]</scope>
</reference>
<gene>
    <name type="primary">COG1</name>
    <name type="synonym">COD3</name>
    <name type="synonym">SEC36</name>
    <name type="synonym">TFI1</name>
    <name type="ordered locus">YGL223C</name>
</gene>
<organism>
    <name type="scientific">Saccharomyces cerevisiae (strain ATCC 204508 / S288c)</name>
    <name type="common">Baker's yeast</name>
    <dbReference type="NCBI Taxonomy" id="559292"/>
    <lineage>
        <taxon>Eukaryota</taxon>
        <taxon>Fungi</taxon>
        <taxon>Dikarya</taxon>
        <taxon>Ascomycota</taxon>
        <taxon>Saccharomycotina</taxon>
        <taxon>Saccharomycetes</taxon>
        <taxon>Saccharomycetales</taxon>
        <taxon>Saccharomycetaceae</taxon>
        <taxon>Saccharomyces</taxon>
    </lineage>
</organism>
<feature type="chain" id="PRO_0000213494" description="Conserved oligomeric Golgi complex subunit 1">
    <location>
        <begin position="1"/>
        <end position="417"/>
    </location>
</feature>
<feature type="modified residue" description="N-acetylmethionine" evidence="8">
    <location>
        <position position="1"/>
    </location>
</feature>
<feature type="modified residue" description="Phosphoserine" evidence="7">
    <location>
        <position position="305"/>
    </location>
</feature>
<sequence>MDEVLPLFRDSHIPQIKDYQLELQNDLTKTNEAFQKNLLKNYNKILSLTDSVNDLSLNLKNVDQDFKSLCFNDEKFQLNKLTPLPYQTTTHISPPRDEEKVSIPSQNILVISNWTISINNFCNRIVTSTTPSRIFDELLLNFHELSLIPVPSKFEALVKDKCCRLQKFLVDSMKTLNLTLLQWVKLYNLLNTEFSSKWDDDLLSIFNESLFETLFNDNVQALLISSANSKDHQYHSNQQYKDAIVVDFVNSSTFRDHLIRRTVKEINTHLDTLSTLRAKLKEPETLHKLDIFHDNDTNLNDGTVSPLDDDALKQYIDTAVFYSKGLTNDTTLQIYQTVQPTIEILQNLELYKCPQETLTDLRNKLITQLQEFKTQISSRLPSPLENSTSVVDDFITSYNNHNLLQLVIDQITQLRQQ</sequence>
<evidence type="ECO:0000250" key="1"/>
<evidence type="ECO:0000269" key="2">
    <source>
    </source>
</evidence>
<evidence type="ECO:0000269" key="3">
    <source>
    </source>
</evidence>
<evidence type="ECO:0000269" key="4">
    <source>
    </source>
</evidence>
<evidence type="ECO:0000269" key="5">
    <source>
    </source>
</evidence>
<evidence type="ECO:0000305" key="6"/>
<evidence type="ECO:0007744" key="7">
    <source>
    </source>
</evidence>
<evidence type="ECO:0007744" key="8">
    <source>
    </source>
</evidence>